<keyword id="KW-0456">Lyase</keyword>
<keyword id="KW-1185">Reference proteome</keyword>
<accession>C8VCM2</accession>
<accession>Q5AWJ9</accession>
<organism>
    <name type="scientific">Emericella nidulans (strain FGSC A4 / ATCC 38163 / CBS 112.46 / NRRL 194 / M139)</name>
    <name type="common">Aspergillus nidulans</name>
    <dbReference type="NCBI Taxonomy" id="227321"/>
    <lineage>
        <taxon>Eukaryota</taxon>
        <taxon>Fungi</taxon>
        <taxon>Dikarya</taxon>
        <taxon>Ascomycota</taxon>
        <taxon>Pezizomycotina</taxon>
        <taxon>Eurotiomycetes</taxon>
        <taxon>Eurotiomycetidae</taxon>
        <taxon>Eurotiales</taxon>
        <taxon>Aspergillaceae</taxon>
        <taxon>Aspergillus</taxon>
        <taxon>Aspergillus subgen. Nidulantes</taxon>
    </lineage>
</organism>
<gene>
    <name evidence="1" type="primary">cyn1</name>
    <name type="ORF">AN7331</name>
</gene>
<comment type="function">
    <text evidence="1">Catalyzes the reaction of cyanate with bicarbonate to produce ammonia and carbon dioxide.</text>
</comment>
<comment type="catalytic activity">
    <reaction evidence="1">
        <text>cyanate + hydrogencarbonate + 3 H(+) = NH4(+) + 2 CO2</text>
        <dbReference type="Rhea" id="RHEA:11120"/>
        <dbReference type="ChEBI" id="CHEBI:15378"/>
        <dbReference type="ChEBI" id="CHEBI:16526"/>
        <dbReference type="ChEBI" id="CHEBI:17544"/>
        <dbReference type="ChEBI" id="CHEBI:28938"/>
        <dbReference type="ChEBI" id="CHEBI:29195"/>
        <dbReference type="EC" id="4.2.1.104"/>
    </reaction>
</comment>
<comment type="similarity">
    <text evidence="1">Belongs to the cyanase family.</text>
</comment>
<comment type="sequence caution" evidence="2">
    <conflict type="erroneous gene model prediction">
        <sequence resource="EMBL-CDS" id="CBF78603"/>
    </conflict>
</comment>
<comment type="sequence caution" evidence="2">
    <conflict type="erroneous gene model prediction">
        <sequence resource="EMBL-CDS" id="EAA61382"/>
    </conflict>
</comment>
<reference key="1">
    <citation type="journal article" date="2005" name="Nature">
        <title>Sequencing of Aspergillus nidulans and comparative analysis with A. fumigatus and A. oryzae.</title>
        <authorList>
            <person name="Galagan J.E."/>
            <person name="Calvo S.E."/>
            <person name="Cuomo C."/>
            <person name="Ma L.-J."/>
            <person name="Wortman J.R."/>
            <person name="Batzoglou S."/>
            <person name="Lee S.-I."/>
            <person name="Bastuerkmen M."/>
            <person name="Spevak C.C."/>
            <person name="Clutterbuck J."/>
            <person name="Kapitonov V."/>
            <person name="Jurka J."/>
            <person name="Scazzocchio C."/>
            <person name="Farman M.L."/>
            <person name="Butler J."/>
            <person name="Purcell S."/>
            <person name="Harris S."/>
            <person name="Braus G.H."/>
            <person name="Draht O."/>
            <person name="Busch S."/>
            <person name="D'Enfert C."/>
            <person name="Bouchier C."/>
            <person name="Goldman G.H."/>
            <person name="Bell-Pedersen D."/>
            <person name="Griffiths-Jones S."/>
            <person name="Doonan J.H."/>
            <person name="Yu J."/>
            <person name="Vienken K."/>
            <person name="Pain A."/>
            <person name="Freitag M."/>
            <person name="Selker E.U."/>
            <person name="Archer D.B."/>
            <person name="Penalva M.A."/>
            <person name="Oakley B.R."/>
            <person name="Momany M."/>
            <person name="Tanaka T."/>
            <person name="Kumagai T."/>
            <person name="Asai K."/>
            <person name="Machida M."/>
            <person name="Nierman W.C."/>
            <person name="Denning D.W."/>
            <person name="Caddick M.X."/>
            <person name="Hynes M."/>
            <person name="Paoletti M."/>
            <person name="Fischer R."/>
            <person name="Miller B.L."/>
            <person name="Dyer P.S."/>
            <person name="Sachs M.S."/>
            <person name="Osmani S.A."/>
            <person name="Birren B.W."/>
        </authorList>
    </citation>
    <scope>NUCLEOTIDE SEQUENCE [LARGE SCALE GENOMIC DNA]</scope>
    <source>
        <strain>FGSC A4 / ATCC 38163 / CBS 112.46 / NRRL 194 / M139</strain>
    </source>
</reference>
<reference key="2">
    <citation type="journal article" date="2009" name="Fungal Genet. Biol.">
        <title>The 2008 update of the Aspergillus nidulans genome annotation: a community effort.</title>
        <authorList>
            <person name="Wortman J.R."/>
            <person name="Gilsenan J.M."/>
            <person name="Joardar V."/>
            <person name="Deegan J."/>
            <person name="Clutterbuck J."/>
            <person name="Andersen M.R."/>
            <person name="Archer D."/>
            <person name="Bencina M."/>
            <person name="Braus G."/>
            <person name="Coutinho P."/>
            <person name="von Dohren H."/>
            <person name="Doonan J."/>
            <person name="Driessen A.J."/>
            <person name="Durek P."/>
            <person name="Espeso E."/>
            <person name="Fekete E."/>
            <person name="Flipphi M."/>
            <person name="Estrada C.G."/>
            <person name="Geysens S."/>
            <person name="Goldman G."/>
            <person name="de Groot P.W."/>
            <person name="Hansen K."/>
            <person name="Harris S.D."/>
            <person name="Heinekamp T."/>
            <person name="Helmstaedt K."/>
            <person name="Henrissat B."/>
            <person name="Hofmann G."/>
            <person name="Homan T."/>
            <person name="Horio T."/>
            <person name="Horiuchi H."/>
            <person name="James S."/>
            <person name="Jones M."/>
            <person name="Karaffa L."/>
            <person name="Karanyi Z."/>
            <person name="Kato M."/>
            <person name="Keller N."/>
            <person name="Kelly D.E."/>
            <person name="Kiel J.A."/>
            <person name="Kim J.M."/>
            <person name="van der Klei I.J."/>
            <person name="Klis F.M."/>
            <person name="Kovalchuk A."/>
            <person name="Krasevec N."/>
            <person name="Kubicek C.P."/>
            <person name="Liu B."/>
            <person name="Maccabe A."/>
            <person name="Meyer V."/>
            <person name="Mirabito P."/>
            <person name="Miskei M."/>
            <person name="Mos M."/>
            <person name="Mullins J."/>
            <person name="Nelson D.R."/>
            <person name="Nielsen J."/>
            <person name="Oakley B.R."/>
            <person name="Osmani S.A."/>
            <person name="Pakula T."/>
            <person name="Paszewski A."/>
            <person name="Paulsen I."/>
            <person name="Pilsyk S."/>
            <person name="Pocsi I."/>
            <person name="Punt P.J."/>
            <person name="Ram A.F."/>
            <person name="Ren Q."/>
            <person name="Robellet X."/>
            <person name="Robson G."/>
            <person name="Seiboth B."/>
            <person name="van Solingen P."/>
            <person name="Specht T."/>
            <person name="Sun J."/>
            <person name="Taheri-Talesh N."/>
            <person name="Takeshita N."/>
            <person name="Ussery D."/>
            <person name="vanKuyk P.A."/>
            <person name="Visser H."/>
            <person name="van de Vondervoort P.J."/>
            <person name="de Vries R.P."/>
            <person name="Walton J."/>
            <person name="Xiang X."/>
            <person name="Xiong Y."/>
            <person name="Zeng A.P."/>
            <person name="Brandt B.W."/>
            <person name="Cornell M.J."/>
            <person name="van den Hondel C.A."/>
            <person name="Visser J."/>
            <person name="Oliver S.G."/>
            <person name="Turner G."/>
        </authorList>
    </citation>
    <scope>GENOME REANNOTATION</scope>
    <source>
        <strain>FGSC A4 / ATCC 38163 / CBS 112.46 / NRRL 194 / M139</strain>
    </source>
</reference>
<feature type="chain" id="PRO_0000403251" description="Cyanate hydratase">
    <location>
        <begin position="1"/>
        <end position="160"/>
    </location>
</feature>
<feature type="active site" evidence="1">
    <location>
        <position position="100"/>
    </location>
</feature>
<feature type="active site" evidence="1">
    <location>
        <position position="103"/>
    </location>
</feature>
<feature type="active site" evidence="1">
    <location>
        <position position="126"/>
    </location>
</feature>
<proteinExistence type="inferred from homology"/>
<sequence length="160" mass="17788">MSLATLDTTQHPNLPASSATLFSAKATKALSFEQIAQHIGRNEVATAAIFYGQAKASPEDIEKLSSLLDIDHETLKAQLSGFPDRGRSVEMPPKEPLIYRLYEIVQNYGYAYKAVLNEKFGDGIMSAISFSTKVEKETDEQGNNWAVITLRGKWLPFSRF</sequence>
<dbReference type="EC" id="4.2.1.104" evidence="1"/>
<dbReference type="EMBL" id="AACD01000127">
    <property type="protein sequence ID" value="EAA61382.1"/>
    <property type="status" value="ALT_SEQ"/>
    <property type="molecule type" value="Genomic_DNA"/>
</dbReference>
<dbReference type="EMBL" id="BN001304">
    <property type="protein sequence ID" value="CBF78603.1"/>
    <property type="status" value="ALT_SEQ"/>
    <property type="molecule type" value="Genomic_DNA"/>
</dbReference>
<dbReference type="RefSeq" id="XP_680600.1">
    <property type="nucleotide sequence ID" value="XM_675508.1"/>
</dbReference>
<dbReference type="SMR" id="C8VCM2"/>
<dbReference type="STRING" id="227321.C8VCM2"/>
<dbReference type="KEGG" id="ani:ANIA_07331"/>
<dbReference type="HOGENOM" id="CLU_103452_0_0_1"/>
<dbReference type="InParanoid" id="C8VCM2"/>
<dbReference type="OrthoDB" id="10019422at2759"/>
<dbReference type="Proteomes" id="UP000000560">
    <property type="component" value="Chromosome IV"/>
</dbReference>
<dbReference type="GO" id="GO:0008824">
    <property type="term" value="F:cyanate hydratase activity"/>
    <property type="evidence" value="ECO:0007669"/>
    <property type="project" value="UniProtKB-UniRule"/>
</dbReference>
<dbReference type="GO" id="GO:0003677">
    <property type="term" value="F:DNA binding"/>
    <property type="evidence" value="ECO:0007669"/>
    <property type="project" value="InterPro"/>
</dbReference>
<dbReference type="GO" id="GO:0009439">
    <property type="term" value="P:cyanate metabolic process"/>
    <property type="evidence" value="ECO:0007669"/>
    <property type="project" value="UniProtKB-UniRule"/>
</dbReference>
<dbReference type="CDD" id="cd00559">
    <property type="entry name" value="Cyanase_C"/>
    <property type="match status" value="1"/>
</dbReference>
<dbReference type="Gene3D" id="3.30.1160.10">
    <property type="entry name" value="Cyanate lyase, C-terminal domain"/>
    <property type="match status" value="1"/>
</dbReference>
<dbReference type="Gene3D" id="1.10.260.40">
    <property type="entry name" value="lambda repressor-like DNA-binding domains"/>
    <property type="match status" value="1"/>
</dbReference>
<dbReference type="HAMAP" id="MF_00535">
    <property type="entry name" value="Cyanate_hydrat"/>
    <property type="match status" value="1"/>
</dbReference>
<dbReference type="InterPro" id="IPR008076">
    <property type="entry name" value="Cyanase"/>
</dbReference>
<dbReference type="InterPro" id="IPR003712">
    <property type="entry name" value="Cyanate_lyase_C"/>
</dbReference>
<dbReference type="InterPro" id="IPR036581">
    <property type="entry name" value="Cyanate_lyase_C_sf"/>
</dbReference>
<dbReference type="InterPro" id="IPR010982">
    <property type="entry name" value="Lambda_DNA-bd_dom_sf"/>
</dbReference>
<dbReference type="NCBIfam" id="TIGR00673">
    <property type="entry name" value="cynS"/>
    <property type="match status" value="1"/>
</dbReference>
<dbReference type="PANTHER" id="PTHR34186">
    <property type="entry name" value="CYANATE HYDRATASE"/>
    <property type="match status" value="1"/>
</dbReference>
<dbReference type="PANTHER" id="PTHR34186:SF2">
    <property type="entry name" value="CYANATE HYDRATASE"/>
    <property type="match status" value="1"/>
</dbReference>
<dbReference type="Pfam" id="PF02560">
    <property type="entry name" value="Cyanate_lyase"/>
    <property type="match status" value="1"/>
</dbReference>
<dbReference type="PIRSF" id="PIRSF001263">
    <property type="entry name" value="Cyanate_hydratas"/>
    <property type="match status" value="1"/>
</dbReference>
<dbReference type="PRINTS" id="PR01693">
    <property type="entry name" value="CYANASE"/>
</dbReference>
<dbReference type="SMART" id="SM01116">
    <property type="entry name" value="Cyanate_lyase"/>
    <property type="match status" value="1"/>
</dbReference>
<dbReference type="SUPFAM" id="SSF55234">
    <property type="entry name" value="Cyanase C-terminal domain"/>
    <property type="match status" value="1"/>
</dbReference>
<dbReference type="SUPFAM" id="SSF47413">
    <property type="entry name" value="lambda repressor-like DNA-binding domains"/>
    <property type="match status" value="1"/>
</dbReference>
<evidence type="ECO:0000255" key="1">
    <source>
        <dbReference type="HAMAP-Rule" id="MF_03139"/>
    </source>
</evidence>
<evidence type="ECO:0000305" key="2"/>
<name>CYNS_EMENI</name>
<protein>
    <recommendedName>
        <fullName evidence="1">Cyanate hydratase</fullName>
        <shortName evidence="1">Cyanase</shortName>
        <ecNumber evidence="1">4.2.1.104</ecNumber>
    </recommendedName>
    <alternativeName>
        <fullName evidence="1">Cyanate hydrolase</fullName>
    </alternativeName>
    <alternativeName>
        <fullName evidence="1">Cyanate lyase</fullName>
    </alternativeName>
</protein>